<gene>
    <name type="primary">FAD7</name>
</gene>
<keyword id="KW-0150">Chloroplast</keyword>
<keyword id="KW-0275">Fatty acid biosynthesis</keyword>
<keyword id="KW-0276">Fatty acid metabolism</keyword>
<keyword id="KW-0444">Lipid biosynthesis</keyword>
<keyword id="KW-0443">Lipid metabolism</keyword>
<keyword id="KW-0472">Membrane</keyword>
<keyword id="KW-0560">Oxidoreductase</keyword>
<keyword id="KW-0934">Plastid</keyword>
<keyword id="KW-1185">Reference proteome</keyword>
<keyword id="KW-0809">Transit peptide</keyword>
<reference key="1">
    <citation type="submission" date="1995-04" db="EMBL/GenBank/DDBJ databases">
        <title>Sesamum indicum chloroplast omega-3 fatty acid desaturase mRNA, complete cds.</title>
        <authorList>
            <person name="Shoji K."/>
        </authorList>
    </citation>
    <scope>NUCLEOTIDE SEQUENCE [MRNA]</scope>
    <source>
        <strain>cv. 4294</strain>
        <tissue>Cotyledon</tissue>
    </source>
</reference>
<accession>P48620</accession>
<organism>
    <name type="scientific">Sesamum indicum</name>
    <name type="common">Oriental sesame</name>
    <name type="synonym">Sesamum orientale</name>
    <dbReference type="NCBI Taxonomy" id="4182"/>
    <lineage>
        <taxon>Eukaryota</taxon>
        <taxon>Viridiplantae</taxon>
        <taxon>Streptophyta</taxon>
        <taxon>Embryophyta</taxon>
        <taxon>Tracheophyta</taxon>
        <taxon>Spermatophyta</taxon>
        <taxon>Magnoliopsida</taxon>
        <taxon>eudicotyledons</taxon>
        <taxon>Gunneridae</taxon>
        <taxon>Pentapetalae</taxon>
        <taxon>asterids</taxon>
        <taxon>lamiids</taxon>
        <taxon>Lamiales</taxon>
        <taxon>Pedaliaceae</taxon>
        <taxon>Sesamum</taxon>
    </lineage>
</organism>
<protein>
    <recommendedName>
        <fullName>Omega-3 fatty acid desaturase, chloroplastic</fullName>
        <ecNumber>1.14.19.-</ecNumber>
    </recommendedName>
</protein>
<name>FAD3C_SESIN</name>
<proteinExistence type="evidence at transcript level"/>
<evidence type="ECO:0000255" key="1"/>
<evidence type="ECO:0000305" key="2"/>
<sequence length="447" mass="51116">MASWVLSECGLRPLPRVYPKPRTGHPLLNSNPTKLRFSRTDLGNGSSFCLSSGILREKNWALRVSAPLRVLQVEEEEENKEGERVINGGEEFDPGAPPPFKLSDIREAIPKHCWVKDPWRSMGYVVRDVAVVFGLAAVAAYFNNWVVWPLYWFAQSTMFWALFVLGHDCGHGSFSNDPKLNSVVGHILHSSILVPYHGWRISHRTHHQNHGHVENDESWHPLSEKIYKNLDTATKKLRFTLPFPLLAYPIYLWSRSPGKQGSHFHPDSDLFVPNEKKDVITSTVCWTAMLALLVGLSFVIGPVQLLKLYGIPYLGNVMWLDLVTYLHHHGHEDKLPWYRGKEWSYLRGGLTTLDRDYGWINNIHHDIGTHVIHHLFPQIPHYHLIEATEAAKPVLGKYYREPKKSAPLPFHLLGDLTRSLKRDHYVSDVGDVVYYQTDPQLTGAEKS</sequence>
<comment type="function">
    <text>Chloroplast omega-3 fatty acid desaturase introduces the third double bond in the biosynthesis of 16:3 and 18:3 fatty acids, important constituents of plant membranes. It is thought to use ferredoxin as an electron donor and to act on fatty acids esterified to galactolipids, sulfolipids and phosphatidylglycerol.</text>
</comment>
<comment type="pathway">
    <text>Lipid metabolism; polyunsaturated fatty acid biosynthesis.</text>
</comment>
<comment type="subcellular location">
    <subcellularLocation>
        <location evidence="2">Plastid</location>
        <location evidence="2">Chloroplast membrane</location>
        <topology evidence="2">Peripheral membrane protein</topology>
    </subcellularLocation>
</comment>
<comment type="domain">
    <text>The histidine box domains may contain the active site and/or be involved in metal ion binding.</text>
</comment>
<comment type="similarity">
    <text evidence="2">Belongs to the fatty acid desaturase type 1 family.</text>
</comment>
<feature type="transit peptide" description="Chloroplast" evidence="1">
    <location>
        <begin position="1"/>
        <end status="unknown"/>
    </location>
</feature>
<feature type="chain" id="PRO_0000007120" description="Omega-3 fatty acid desaturase, chloroplastic">
    <location>
        <begin status="unknown"/>
        <end position="447"/>
    </location>
</feature>
<feature type="short sequence motif" description="Histidine box-1">
    <location>
        <begin position="167"/>
        <end position="171"/>
    </location>
</feature>
<feature type="short sequence motif" description="Histidine box-2">
    <location>
        <begin position="203"/>
        <end position="207"/>
    </location>
</feature>
<feature type="short sequence motif" description="Histidine box-3">
    <location>
        <begin position="370"/>
        <end position="374"/>
    </location>
</feature>
<dbReference type="EC" id="1.14.19.-"/>
<dbReference type="EMBL" id="U25817">
    <property type="protein sequence ID" value="AAA70334.1"/>
    <property type="molecule type" value="mRNA"/>
</dbReference>
<dbReference type="RefSeq" id="NP_001306619.1">
    <property type="nucleotide sequence ID" value="NM_001319690.1"/>
</dbReference>
<dbReference type="RefSeq" id="XP_011084901.1">
    <property type="nucleotide sequence ID" value="XM_011086599.1"/>
</dbReference>
<dbReference type="SMR" id="P48620"/>
<dbReference type="FunCoup" id="P48620">
    <property type="interactions" value="747"/>
</dbReference>
<dbReference type="GeneID" id="105167042"/>
<dbReference type="KEGG" id="sind:105167042"/>
<dbReference type="InParanoid" id="P48620"/>
<dbReference type="OrthoDB" id="1461976at2759"/>
<dbReference type="BRENDA" id="1.14.19.35">
    <property type="organism ID" value="5697"/>
</dbReference>
<dbReference type="UniPathway" id="UPA00658"/>
<dbReference type="Proteomes" id="UP000504604">
    <property type="component" value="Linkage group LG7"/>
</dbReference>
<dbReference type="GO" id="GO:0031969">
    <property type="term" value="C:chloroplast membrane"/>
    <property type="evidence" value="ECO:0007669"/>
    <property type="project" value="UniProtKB-SubCell"/>
</dbReference>
<dbReference type="GO" id="GO:0016717">
    <property type="term" value="F:oxidoreductase activity, acting on paired donors, with oxidation of a pair of donors resulting in the reduction of molecular oxygen to two molecules of water"/>
    <property type="evidence" value="ECO:0007669"/>
    <property type="project" value="InterPro"/>
</dbReference>
<dbReference type="GO" id="GO:0006636">
    <property type="term" value="P:unsaturated fatty acid biosynthetic process"/>
    <property type="evidence" value="ECO:0007669"/>
    <property type="project" value="UniProtKB-UniPathway"/>
</dbReference>
<dbReference type="CDD" id="cd03507">
    <property type="entry name" value="Delta12-FADS-like"/>
    <property type="match status" value="1"/>
</dbReference>
<dbReference type="InterPro" id="IPR005804">
    <property type="entry name" value="FA_desaturase_dom"/>
</dbReference>
<dbReference type="InterPro" id="IPR021863">
    <property type="entry name" value="FAS_N"/>
</dbReference>
<dbReference type="InterPro" id="IPR012171">
    <property type="entry name" value="Fatty_acid_desaturase"/>
</dbReference>
<dbReference type="PANTHER" id="PTHR32100">
    <property type="entry name" value="OMEGA-6 FATTY ACID DESATURASE, CHLOROPLASTIC"/>
    <property type="match status" value="1"/>
</dbReference>
<dbReference type="Pfam" id="PF11960">
    <property type="entry name" value="DUF3474"/>
    <property type="match status" value="1"/>
</dbReference>
<dbReference type="Pfam" id="PF00487">
    <property type="entry name" value="FA_desaturase"/>
    <property type="match status" value="1"/>
</dbReference>